<keyword id="KW-0285">Flavoprotein</keyword>
<keyword id="KW-0288">FMN</keyword>
<keyword id="KW-0560">Oxidoreductase</keyword>
<keyword id="KW-0664">Pyridoxine biosynthesis</keyword>
<comment type="function">
    <text evidence="1">Catalyzes the oxidation of either pyridoxine 5'-phosphate (PNP) or pyridoxamine 5'-phosphate (PMP) into pyridoxal 5'-phosphate (PLP).</text>
</comment>
<comment type="catalytic activity">
    <reaction evidence="1">
        <text>pyridoxamine 5'-phosphate + O2 + H2O = pyridoxal 5'-phosphate + H2O2 + NH4(+)</text>
        <dbReference type="Rhea" id="RHEA:15817"/>
        <dbReference type="ChEBI" id="CHEBI:15377"/>
        <dbReference type="ChEBI" id="CHEBI:15379"/>
        <dbReference type="ChEBI" id="CHEBI:16240"/>
        <dbReference type="ChEBI" id="CHEBI:28938"/>
        <dbReference type="ChEBI" id="CHEBI:58451"/>
        <dbReference type="ChEBI" id="CHEBI:597326"/>
        <dbReference type="EC" id="1.4.3.5"/>
    </reaction>
</comment>
<comment type="catalytic activity">
    <reaction evidence="1">
        <text>pyridoxine 5'-phosphate + O2 = pyridoxal 5'-phosphate + H2O2</text>
        <dbReference type="Rhea" id="RHEA:15149"/>
        <dbReference type="ChEBI" id="CHEBI:15379"/>
        <dbReference type="ChEBI" id="CHEBI:16240"/>
        <dbReference type="ChEBI" id="CHEBI:58589"/>
        <dbReference type="ChEBI" id="CHEBI:597326"/>
        <dbReference type="EC" id="1.4.3.5"/>
    </reaction>
</comment>
<comment type="cofactor">
    <cofactor evidence="1">
        <name>FMN</name>
        <dbReference type="ChEBI" id="CHEBI:58210"/>
    </cofactor>
    <text evidence="1">Binds 1 FMN per subunit.</text>
</comment>
<comment type="pathway">
    <text evidence="1">Cofactor metabolism; pyridoxal 5'-phosphate salvage; pyridoxal 5'-phosphate from pyridoxamine 5'-phosphate: step 1/1.</text>
</comment>
<comment type="pathway">
    <text evidence="1">Cofactor metabolism; pyridoxal 5'-phosphate salvage; pyridoxal 5'-phosphate from pyridoxine 5'-phosphate: step 1/1.</text>
</comment>
<comment type="subunit">
    <text evidence="1">Homodimer.</text>
</comment>
<comment type="similarity">
    <text evidence="1">Belongs to the pyridoxamine 5'-phosphate oxidase family.</text>
</comment>
<comment type="sequence caution" evidence="2">
    <conflict type="erroneous initiation">
        <sequence resource="EMBL-CDS" id="AAA25392"/>
    </conflict>
</comment>
<reference key="1">
    <citation type="journal article" date="1990" name="J. Bacteriol.">
        <title>Nucleotide sequence and transcriptional products of the csg locus of Myxococcus xanthus.</title>
        <authorList>
            <person name="Hagen T.J."/>
            <person name="Shimkets L.J."/>
        </authorList>
    </citation>
    <scope>NUCLEOTIDE SEQUENCE [GENOMIC DNA]</scope>
</reference>
<reference key="2">
    <citation type="journal article" date="1990" name="J. Bacteriol.">
        <title>The Myxococcus xanthus FprA protein causes increased flavin biosynthesis in Escherichia coli.</title>
        <authorList>
            <person name="Shimkets L.J."/>
        </authorList>
    </citation>
    <scope>FMN-BINDING</scope>
</reference>
<sequence length="220" mass="25285">MRTLTCVPDESTAKVHTCRAPFMLHRVMIPPDPIQRFAELFERAKQAIAVDPNAMVVATVGDDGRPSARVVLLKDFDARGFVFYTNHESRKGREARAHPYAALCFYWQPLNEQVRVEGRVERVTDAEADAYFQSRARGSQVGAWASLQSQPLATREELEARVAEVEQKYAGQPVPRPPHWSGFRVVPDRIEFWHAQESRLHDRHVYLREDGGWRTQMLYP</sequence>
<proteinExistence type="evidence at protein level"/>
<accession>P21159</accession>
<gene>
    <name evidence="1" type="primary">pdxH</name>
    <name type="synonym">fprA</name>
</gene>
<feature type="chain" id="PRO_0000167724" description="Pyridoxine/pyridoxamine 5'-phosphate oxidase">
    <location>
        <begin position="1"/>
        <end position="220"/>
    </location>
</feature>
<feature type="binding site" evidence="1">
    <location>
        <begin position="69"/>
        <end position="74"/>
    </location>
    <ligand>
        <name>FMN</name>
        <dbReference type="ChEBI" id="CHEBI:58210"/>
    </ligand>
</feature>
<feature type="binding site" evidence="1">
    <location>
        <position position="74"/>
    </location>
    <ligand>
        <name>substrate</name>
    </ligand>
</feature>
<feature type="binding site" evidence="1">
    <location>
        <begin position="84"/>
        <end position="85"/>
    </location>
    <ligand>
        <name>FMN</name>
        <dbReference type="ChEBI" id="CHEBI:58210"/>
    </ligand>
</feature>
<feature type="binding site" evidence="1">
    <location>
        <position position="90"/>
    </location>
    <ligand>
        <name>FMN</name>
        <dbReference type="ChEBI" id="CHEBI:58210"/>
    </ligand>
</feature>
<feature type="binding site" evidence="1">
    <location>
        <position position="91"/>
    </location>
    <ligand>
        <name>FMN</name>
        <dbReference type="ChEBI" id="CHEBI:58210"/>
    </ligand>
</feature>
<feature type="binding site" evidence="1">
    <location>
        <position position="113"/>
    </location>
    <ligand>
        <name>FMN</name>
        <dbReference type="ChEBI" id="CHEBI:58210"/>
    </ligand>
</feature>
<feature type="binding site" evidence="1">
    <location>
        <position position="131"/>
    </location>
    <ligand>
        <name>substrate</name>
    </ligand>
</feature>
<feature type="binding site" evidence="1">
    <location>
        <position position="135"/>
    </location>
    <ligand>
        <name>substrate</name>
    </ligand>
</feature>
<feature type="binding site" evidence="1">
    <location>
        <position position="139"/>
    </location>
    <ligand>
        <name>substrate</name>
    </ligand>
</feature>
<feature type="binding site" evidence="1">
    <location>
        <begin position="148"/>
        <end position="149"/>
    </location>
    <ligand>
        <name>FMN</name>
        <dbReference type="ChEBI" id="CHEBI:58210"/>
    </ligand>
</feature>
<feature type="binding site" evidence="1">
    <location>
        <position position="193"/>
    </location>
    <ligand>
        <name>FMN</name>
        <dbReference type="ChEBI" id="CHEBI:58210"/>
    </ligand>
</feature>
<feature type="binding site" evidence="1">
    <location>
        <begin position="199"/>
        <end position="201"/>
    </location>
    <ligand>
        <name>substrate</name>
    </ligand>
</feature>
<feature type="binding site" evidence="1">
    <location>
        <position position="203"/>
    </location>
    <ligand>
        <name>FMN</name>
        <dbReference type="ChEBI" id="CHEBI:58210"/>
    </ligand>
</feature>
<name>PDXH_MYXXA</name>
<evidence type="ECO:0000255" key="1">
    <source>
        <dbReference type="HAMAP-Rule" id="MF_01629"/>
    </source>
</evidence>
<evidence type="ECO:0000305" key="2"/>
<dbReference type="EC" id="1.4.3.5" evidence="1"/>
<dbReference type="EMBL" id="L27429">
    <property type="protein sequence ID" value="AAA25392.2"/>
    <property type="status" value="ALT_INIT"/>
    <property type="molecule type" value="Genomic_DNA"/>
</dbReference>
<dbReference type="PIR" id="S36092">
    <property type="entry name" value="S36092"/>
</dbReference>
<dbReference type="PIR" id="T10126">
    <property type="entry name" value="T10126"/>
</dbReference>
<dbReference type="RefSeq" id="WP_011551412.1">
    <property type="nucleotide sequence ID" value="NZ_JABFNQ010000064.1"/>
</dbReference>
<dbReference type="SMR" id="P21159"/>
<dbReference type="GeneID" id="41358741"/>
<dbReference type="OMA" id="AYFRTRP"/>
<dbReference type="UniPathway" id="UPA01068">
    <property type="reaction ID" value="UER00304"/>
</dbReference>
<dbReference type="UniPathway" id="UPA01068">
    <property type="reaction ID" value="UER00305"/>
</dbReference>
<dbReference type="GO" id="GO:0010181">
    <property type="term" value="F:FMN binding"/>
    <property type="evidence" value="ECO:0007669"/>
    <property type="project" value="InterPro"/>
</dbReference>
<dbReference type="GO" id="GO:0004733">
    <property type="term" value="F:pyridoxamine phosphate oxidase activity"/>
    <property type="evidence" value="ECO:0007669"/>
    <property type="project" value="UniProtKB-EC"/>
</dbReference>
<dbReference type="GO" id="GO:0008615">
    <property type="term" value="P:pyridoxine biosynthetic process"/>
    <property type="evidence" value="ECO:0007669"/>
    <property type="project" value="UniProtKB-KW"/>
</dbReference>
<dbReference type="FunFam" id="2.30.110.10:FF:000020">
    <property type="entry name" value="PNPO isoform 11"/>
    <property type="match status" value="1"/>
</dbReference>
<dbReference type="Gene3D" id="2.30.110.10">
    <property type="entry name" value="Electron Transport, Fmn-binding Protein, Chain A"/>
    <property type="match status" value="1"/>
</dbReference>
<dbReference type="HAMAP" id="MF_01629">
    <property type="entry name" value="PdxH"/>
    <property type="match status" value="1"/>
</dbReference>
<dbReference type="InterPro" id="IPR000659">
    <property type="entry name" value="Pyridox_Oxase"/>
</dbReference>
<dbReference type="InterPro" id="IPR019740">
    <property type="entry name" value="Pyridox_Oxase_CS"/>
</dbReference>
<dbReference type="InterPro" id="IPR011576">
    <property type="entry name" value="Pyridox_Oxase_N"/>
</dbReference>
<dbReference type="InterPro" id="IPR019576">
    <property type="entry name" value="Pyridoxamine_oxidase_dimer_C"/>
</dbReference>
<dbReference type="InterPro" id="IPR012349">
    <property type="entry name" value="Split_barrel_FMN-bd"/>
</dbReference>
<dbReference type="NCBIfam" id="TIGR00558">
    <property type="entry name" value="pdxH"/>
    <property type="match status" value="1"/>
</dbReference>
<dbReference type="NCBIfam" id="NF004231">
    <property type="entry name" value="PRK05679.1"/>
    <property type="match status" value="1"/>
</dbReference>
<dbReference type="PANTHER" id="PTHR10851:SF0">
    <property type="entry name" value="PYRIDOXINE-5'-PHOSPHATE OXIDASE"/>
    <property type="match status" value="1"/>
</dbReference>
<dbReference type="PANTHER" id="PTHR10851">
    <property type="entry name" value="PYRIDOXINE-5-PHOSPHATE OXIDASE"/>
    <property type="match status" value="1"/>
</dbReference>
<dbReference type="Pfam" id="PF10590">
    <property type="entry name" value="PNP_phzG_C"/>
    <property type="match status" value="1"/>
</dbReference>
<dbReference type="Pfam" id="PF01243">
    <property type="entry name" value="PNPOx_N"/>
    <property type="match status" value="1"/>
</dbReference>
<dbReference type="PIRSF" id="PIRSF000190">
    <property type="entry name" value="Pyd_amn-ph_oxd"/>
    <property type="match status" value="1"/>
</dbReference>
<dbReference type="SUPFAM" id="SSF50475">
    <property type="entry name" value="FMN-binding split barrel"/>
    <property type="match status" value="1"/>
</dbReference>
<dbReference type="PROSITE" id="PS01064">
    <property type="entry name" value="PYRIDOX_OXIDASE"/>
    <property type="match status" value="1"/>
</dbReference>
<organism>
    <name type="scientific">Myxococcus xanthus</name>
    <dbReference type="NCBI Taxonomy" id="34"/>
    <lineage>
        <taxon>Bacteria</taxon>
        <taxon>Pseudomonadati</taxon>
        <taxon>Myxococcota</taxon>
        <taxon>Myxococcia</taxon>
        <taxon>Myxococcales</taxon>
        <taxon>Cystobacterineae</taxon>
        <taxon>Myxococcaceae</taxon>
        <taxon>Myxococcus</taxon>
    </lineage>
</organism>
<protein>
    <recommendedName>
        <fullName evidence="1">Pyridoxine/pyridoxamine 5'-phosphate oxidase</fullName>
        <ecNumber evidence="1">1.4.3.5</ecNumber>
    </recommendedName>
    <alternativeName>
        <fullName evidence="1">PNP/PMP oxidase</fullName>
        <shortName evidence="1">PNPOx</shortName>
    </alternativeName>
    <alternativeName>
        <fullName evidence="1">Pyridoxal 5'-phosphate synthase</fullName>
    </alternativeName>
</protein>